<dbReference type="EC" id="6.3.4.20" evidence="1"/>
<dbReference type="EMBL" id="CP000967">
    <property type="protein sequence ID" value="ACD59817.1"/>
    <property type="molecule type" value="Genomic_DNA"/>
</dbReference>
<dbReference type="RefSeq" id="WP_008578058.1">
    <property type="nucleotide sequence ID" value="NC_010717.2"/>
</dbReference>
<dbReference type="SMR" id="B2STI7"/>
<dbReference type="GeneID" id="97511393"/>
<dbReference type="KEGG" id="xop:PXO_01572"/>
<dbReference type="eggNOG" id="COG0603">
    <property type="taxonomic scope" value="Bacteria"/>
</dbReference>
<dbReference type="HOGENOM" id="CLU_081854_1_1_6"/>
<dbReference type="UniPathway" id="UPA00391"/>
<dbReference type="Proteomes" id="UP000001740">
    <property type="component" value="Chromosome"/>
</dbReference>
<dbReference type="GO" id="GO:0005524">
    <property type="term" value="F:ATP binding"/>
    <property type="evidence" value="ECO:0007669"/>
    <property type="project" value="UniProtKB-UniRule"/>
</dbReference>
<dbReference type="GO" id="GO:0016879">
    <property type="term" value="F:ligase activity, forming carbon-nitrogen bonds"/>
    <property type="evidence" value="ECO:0007669"/>
    <property type="project" value="UniProtKB-UniRule"/>
</dbReference>
<dbReference type="GO" id="GO:0008270">
    <property type="term" value="F:zinc ion binding"/>
    <property type="evidence" value="ECO:0007669"/>
    <property type="project" value="UniProtKB-UniRule"/>
</dbReference>
<dbReference type="GO" id="GO:0008616">
    <property type="term" value="P:queuosine biosynthetic process"/>
    <property type="evidence" value="ECO:0007669"/>
    <property type="project" value="UniProtKB-UniRule"/>
</dbReference>
<dbReference type="CDD" id="cd01995">
    <property type="entry name" value="QueC-like"/>
    <property type="match status" value="1"/>
</dbReference>
<dbReference type="FunFam" id="3.40.50.620:FF:000131">
    <property type="entry name" value="7-cyano-7-deazaguanine synthase"/>
    <property type="match status" value="1"/>
</dbReference>
<dbReference type="Gene3D" id="3.40.50.620">
    <property type="entry name" value="HUPs"/>
    <property type="match status" value="1"/>
</dbReference>
<dbReference type="HAMAP" id="MF_01633">
    <property type="entry name" value="QueC"/>
    <property type="match status" value="1"/>
</dbReference>
<dbReference type="InterPro" id="IPR018317">
    <property type="entry name" value="QueC"/>
</dbReference>
<dbReference type="InterPro" id="IPR014729">
    <property type="entry name" value="Rossmann-like_a/b/a_fold"/>
</dbReference>
<dbReference type="NCBIfam" id="TIGR00364">
    <property type="entry name" value="7-cyano-7-deazaguanine synthase QueC"/>
    <property type="match status" value="1"/>
</dbReference>
<dbReference type="PANTHER" id="PTHR42914">
    <property type="entry name" value="7-CYANO-7-DEAZAGUANINE SYNTHASE"/>
    <property type="match status" value="1"/>
</dbReference>
<dbReference type="PANTHER" id="PTHR42914:SF1">
    <property type="entry name" value="7-CYANO-7-DEAZAGUANINE SYNTHASE"/>
    <property type="match status" value="1"/>
</dbReference>
<dbReference type="Pfam" id="PF06508">
    <property type="entry name" value="QueC"/>
    <property type="match status" value="1"/>
</dbReference>
<dbReference type="PIRSF" id="PIRSF006293">
    <property type="entry name" value="ExsB"/>
    <property type="match status" value="1"/>
</dbReference>
<dbReference type="SUPFAM" id="SSF52402">
    <property type="entry name" value="Adenine nucleotide alpha hydrolases-like"/>
    <property type="match status" value="1"/>
</dbReference>
<accession>B2STI7</accession>
<reference key="1">
    <citation type="journal article" date="2008" name="BMC Genomics">
        <title>Genome sequence and rapid evolution of the rice pathogen Xanthomonas oryzae pv. oryzae PXO99A.</title>
        <authorList>
            <person name="Salzberg S.L."/>
            <person name="Sommer D.D."/>
            <person name="Schatz M.C."/>
            <person name="Phillippy A.M."/>
            <person name="Rabinowicz P.D."/>
            <person name="Tsuge S."/>
            <person name="Furutani A."/>
            <person name="Ochiai H."/>
            <person name="Delcher A.L."/>
            <person name="Kelley D."/>
            <person name="Madupu R."/>
            <person name="Puiu D."/>
            <person name="Radune D."/>
            <person name="Shumway M."/>
            <person name="Trapnell C."/>
            <person name="Aparna G."/>
            <person name="Jha G."/>
            <person name="Pandey A."/>
            <person name="Patil P.B."/>
            <person name="Ishihara H."/>
            <person name="Meyer D.F."/>
            <person name="Szurek B."/>
            <person name="Verdier V."/>
            <person name="Koebnik R."/>
            <person name="Dow J.M."/>
            <person name="Ryan R.P."/>
            <person name="Hirata H."/>
            <person name="Tsuyumu S."/>
            <person name="Won Lee S."/>
            <person name="Seo Y.-S."/>
            <person name="Sriariyanum M."/>
            <person name="Ronald P.C."/>
            <person name="Sonti R.V."/>
            <person name="Van Sluys M.-A."/>
            <person name="Leach J.E."/>
            <person name="White F.F."/>
            <person name="Bogdanove A.J."/>
        </authorList>
    </citation>
    <scope>NUCLEOTIDE SEQUENCE [LARGE SCALE GENOMIC DNA]</scope>
    <source>
        <strain>PXO99A</strain>
    </source>
</reference>
<comment type="function">
    <text evidence="1">Catalyzes the ATP-dependent conversion of 7-carboxy-7-deazaguanine (CDG) to 7-cyano-7-deazaguanine (preQ(0)).</text>
</comment>
<comment type="catalytic activity">
    <reaction evidence="1">
        <text>7-carboxy-7-deazaguanine + NH4(+) + ATP = 7-cyano-7-deazaguanine + ADP + phosphate + H2O + H(+)</text>
        <dbReference type="Rhea" id="RHEA:27982"/>
        <dbReference type="ChEBI" id="CHEBI:15377"/>
        <dbReference type="ChEBI" id="CHEBI:15378"/>
        <dbReference type="ChEBI" id="CHEBI:28938"/>
        <dbReference type="ChEBI" id="CHEBI:30616"/>
        <dbReference type="ChEBI" id="CHEBI:43474"/>
        <dbReference type="ChEBI" id="CHEBI:45075"/>
        <dbReference type="ChEBI" id="CHEBI:61036"/>
        <dbReference type="ChEBI" id="CHEBI:456216"/>
        <dbReference type="EC" id="6.3.4.20"/>
    </reaction>
</comment>
<comment type="cofactor">
    <cofactor evidence="1">
        <name>Zn(2+)</name>
        <dbReference type="ChEBI" id="CHEBI:29105"/>
    </cofactor>
    <text evidence="1">Binds 1 zinc ion per subunit.</text>
</comment>
<comment type="pathway">
    <text evidence="1">Purine metabolism; 7-cyano-7-deazaguanine biosynthesis.</text>
</comment>
<comment type="similarity">
    <text evidence="1">Belongs to the QueC family.</text>
</comment>
<name>QUEC_XANOP</name>
<proteinExistence type="inferred from homology"/>
<sequence length="224" mass="23263">MKKAVVLLSGGMDSAAVIALAQEQGFAVYALSVRYGQRHTSELDAAARVAAAQGVVAHKVVDVDLRSIGGSALTDDIDVPDAGGDGIPVTYVPARNTIMLSLALGWAEVVGANDLFCGVNAVDYSGYPDCRPEFVRAFEVLANLATKAGVEGAGLRVHAPLQFLSKADIVREGVRLGVDFGLTVSCYRADADGRACGHCDACRLRAAGFADAGVPDPTHYAILS</sequence>
<feature type="chain" id="PRO_1000186645" description="7-cyano-7-deazaguanine synthase">
    <location>
        <begin position="1"/>
        <end position="224"/>
    </location>
</feature>
<feature type="binding site" evidence="1">
    <location>
        <begin position="8"/>
        <end position="18"/>
    </location>
    <ligand>
        <name>ATP</name>
        <dbReference type="ChEBI" id="CHEBI:30616"/>
    </ligand>
</feature>
<feature type="binding site" evidence="1">
    <location>
        <position position="186"/>
    </location>
    <ligand>
        <name>Zn(2+)</name>
        <dbReference type="ChEBI" id="CHEBI:29105"/>
    </ligand>
</feature>
<feature type="binding site" evidence="1">
    <location>
        <position position="196"/>
    </location>
    <ligand>
        <name>Zn(2+)</name>
        <dbReference type="ChEBI" id="CHEBI:29105"/>
    </ligand>
</feature>
<feature type="binding site" evidence="1">
    <location>
        <position position="199"/>
    </location>
    <ligand>
        <name>Zn(2+)</name>
        <dbReference type="ChEBI" id="CHEBI:29105"/>
    </ligand>
</feature>
<feature type="binding site" evidence="1">
    <location>
        <position position="202"/>
    </location>
    <ligand>
        <name>Zn(2+)</name>
        <dbReference type="ChEBI" id="CHEBI:29105"/>
    </ligand>
</feature>
<organism>
    <name type="scientific">Xanthomonas oryzae pv. oryzae (strain PXO99A)</name>
    <dbReference type="NCBI Taxonomy" id="360094"/>
    <lineage>
        <taxon>Bacteria</taxon>
        <taxon>Pseudomonadati</taxon>
        <taxon>Pseudomonadota</taxon>
        <taxon>Gammaproteobacteria</taxon>
        <taxon>Lysobacterales</taxon>
        <taxon>Lysobacteraceae</taxon>
        <taxon>Xanthomonas</taxon>
    </lineage>
</organism>
<evidence type="ECO:0000255" key="1">
    <source>
        <dbReference type="HAMAP-Rule" id="MF_01633"/>
    </source>
</evidence>
<keyword id="KW-0067">ATP-binding</keyword>
<keyword id="KW-0436">Ligase</keyword>
<keyword id="KW-0479">Metal-binding</keyword>
<keyword id="KW-0547">Nucleotide-binding</keyword>
<keyword id="KW-0671">Queuosine biosynthesis</keyword>
<keyword id="KW-0862">Zinc</keyword>
<protein>
    <recommendedName>
        <fullName evidence="1">7-cyano-7-deazaguanine synthase</fullName>
        <ecNumber evidence="1">6.3.4.20</ecNumber>
    </recommendedName>
    <alternativeName>
        <fullName evidence="1">7-cyano-7-carbaguanine synthase</fullName>
    </alternativeName>
    <alternativeName>
        <fullName evidence="1">PreQ(0) synthase</fullName>
    </alternativeName>
    <alternativeName>
        <fullName evidence="1">Queuosine biosynthesis protein QueC</fullName>
    </alternativeName>
</protein>
<gene>
    <name evidence="1" type="primary">queC</name>
    <name type="ordered locus">PXO_01572</name>
</gene>